<evidence type="ECO:0000250" key="1">
    <source>
        <dbReference type="UniProtKB" id="P0AC13"/>
    </source>
</evidence>
<evidence type="ECO:0000250" key="2">
    <source>
        <dbReference type="UniProtKB" id="P9WND1"/>
    </source>
</evidence>
<evidence type="ECO:0000255" key="3">
    <source>
        <dbReference type="PROSITE-ProRule" id="PRU00334"/>
    </source>
</evidence>
<evidence type="ECO:0000305" key="4"/>
<feature type="chain" id="PRO_0000168232" description="Dihydropteroate synthase">
    <location>
        <begin position="1"/>
        <end position="266"/>
    </location>
</feature>
<feature type="domain" description="Pterin-binding" evidence="3">
    <location>
        <begin position="12"/>
        <end position="260"/>
    </location>
</feature>
<feature type="binding site" evidence="2">
    <location>
        <position position="19"/>
    </location>
    <ligand>
        <name>Mg(2+)</name>
        <dbReference type="ChEBI" id="CHEBI:18420"/>
    </ligand>
</feature>
<feature type="binding site" evidence="1">
    <location>
        <position position="59"/>
    </location>
    <ligand>
        <name>(7,8-dihydropterin-6-yl)methyl diphosphate</name>
        <dbReference type="ChEBI" id="CHEBI:72950"/>
    </ligand>
</feature>
<feature type="binding site" evidence="1">
    <location>
        <position position="93"/>
    </location>
    <ligand>
        <name>(7,8-dihydropterin-6-yl)methyl diphosphate</name>
        <dbReference type="ChEBI" id="CHEBI:72950"/>
    </ligand>
</feature>
<feature type="binding site" evidence="1">
    <location>
        <position position="112"/>
    </location>
    <ligand>
        <name>(7,8-dihydropterin-6-yl)methyl diphosphate</name>
        <dbReference type="ChEBI" id="CHEBI:72950"/>
    </ligand>
</feature>
<feature type="binding site" evidence="1">
    <location>
        <position position="176"/>
    </location>
    <ligand>
        <name>(7,8-dihydropterin-6-yl)methyl diphosphate</name>
        <dbReference type="ChEBI" id="CHEBI:72950"/>
    </ligand>
</feature>
<feature type="binding site" evidence="1">
    <location>
        <position position="212"/>
    </location>
    <ligand>
        <name>(7,8-dihydropterin-6-yl)methyl diphosphate</name>
        <dbReference type="ChEBI" id="CHEBI:72950"/>
    </ligand>
</feature>
<feature type="binding site" evidence="1">
    <location>
        <begin position="248"/>
        <end position="250"/>
    </location>
    <ligand>
        <name>(7,8-dihydropterin-6-yl)methyl diphosphate</name>
        <dbReference type="ChEBI" id="CHEBI:72950"/>
    </ligand>
</feature>
<name>DHPS_STRPY</name>
<reference key="1">
    <citation type="journal article" date="1998" name="Antimicrob. Agents Chemother.">
        <title>Sulfonamide resistance in Streptococcus pyogenes is associated with differences in the amino acid sequence of its chromosomal dihydropteroate synthase.</title>
        <authorList>
            <person name="Swedberg G."/>
            <person name="Ringertz S."/>
            <person name="Skoeld O."/>
        </authorList>
    </citation>
    <scope>NUCLEOTIDE SEQUENCE [GENOMIC DNA]</scope>
    <source>
        <strain>G56</strain>
    </source>
</reference>
<reference key="2">
    <citation type="journal article" date="1993" name="Adv. Exp. Med. Biol.">
        <title>Point mutations in the dihydropteroate synthase gene causing sulfonamide resistance.</title>
        <authorList>
            <person name="Swedberg G."/>
            <person name="Fermer C."/>
            <person name="Skoeld O."/>
        </authorList>
    </citation>
    <scope>NUCLEOTIDE SEQUENCE [GENOMIC DNA]</scope>
    <source>
        <strain>G56</strain>
    </source>
</reference>
<dbReference type="EC" id="2.5.1.15"/>
<dbReference type="EMBL" id="AJ000685">
    <property type="protein sequence ID" value="CAA04238.1"/>
    <property type="molecule type" value="Genomic_DNA"/>
</dbReference>
<dbReference type="RefSeq" id="WP_136026150.1">
    <property type="nucleotide sequence ID" value="NZ_CAAHHG010000007.1"/>
</dbReference>
<dbReference type="SMR" id="P0C0G0"/>
<dbReference type="STRING" id="1314.SD89_04125"/>
<dbReference type="SABIO-RK" id="P0C0G0"/>
<dbReference type="UniPathway" id="UPA00077">
    <property type="reaction ID" value="UER00156"/>
</dbReference>
<dbReference type="GO" id="GO:0005829">
    <property type="term" value="C:cytosol"/>
    <property type="evidence" value="ECO:0007669"/>
    <property type="project" value="TreeGrafter"/>
</dbReference>
<dbReference type="GO" id="GO:0004156">
    <property type="term" value="F:dihydropteroate synthase activity"/>
    <property type="evidence" value="ECO:0007669"/>
    <property type="project" value="UniProtKB-EC"/>
</dbReference>
<dbReference type="GO" id="GO:0046872">
    <property type="term" value="F:metal ion binding"/>
    <property type="evidence" value="ECO:0007669"/>
    <property type="project" value="UniProtKB-KW"/>
</dbReference>
<dbReference type="GO" id="GO:0046656">
    <property type="term" value="P:folic acid biosynthetic process"/>
    <property type="evidence" value="ECO:0007669"/>
    <property type="project" value="UniProtKB-KW"/>
</dbReference>
<dbReference type="GO" id="GO:0046654">
    <property type="term" value="P:tetrahydrofolate biosynthetic process"/>
    <property type="evidence" value="ECO:0007669"/>
    <property type="project" value="UniProtKB-UniPathway"/>
</dbReference>
<dbReference type="CDD" id="cd00739">
    <property type="entry name" value="DHPS"/>
    <property type="match status" value="1"/>
</dbReference>
<dbReference type="FunFam" id="3.20.20.20:FF:000006">
    <property type="entry name" value="Dihydropteroate synthase"/>
    <property type="match status" value="1"/>
</dbReference>
<dbReference type="Gene3D" id="3.20.20.20">
    <property type="entry name" value="Dihydropteroate synthase-like"/>
    <property type="match status" value="1"/>
</dbReference>
<dbReference type="InterPro" id="IPR045031">
    <property type="entry name" value="DHP_synth-like"/>
</dbReference>
<dbReference type="InterPro" id="IPR006390">
    <property type="entry name" value="DHP_synth_dom"/>
</dbReference>
<dbReference type="InterPro" id="IPR011005">
    <property type="entry name" value="Dihydropteroate_synth-like_sf"/>
</dbReference>
<dbReference type="InterPro" id="IPR000489">
    <property type="entry name" value="Pterin-binding_dom"/>
</dbReference>
<dbReference type="NCBIfam" id="TIGR01496">
    <property type="entry name" value="DHPS"/>
    <property type="match status" value="1"/>
</dbReference>
<dbReference type="PANTHER" id="PTHR20941">
    <property type="entry name" value="FOLATE SYNTHESIS PROTEINS"/>
    <property type="match status" value="1"/>
</dbReference>
<dbReference type="PANTHER" id="PTHR20941:SF1">
    <property type="entry name" value="FOLIC ACID SYNTHESIS PROTEIN FOL1"/>
    <property type="match status" value="1"/>
</dbReference>
<dbReference type="Pfam" id="PF00809">
    <property type="entry name" value="Pterin_bind"/>
    <property type="match status" value="1"/>
</dbReference>
<dbReference type="SUPFAM" id="SSF51717">
    <property type="entry name" value="Dihydropteroate synthetase-like"/>
    <property type="match status" value="1"/>
</dbReference>
<dbReference type="PROSITE" id="PS00792">
    <property type="entry name" value="DHPS_1"/>
    <property type="match status" value="1"/>
</dbReference>
<dbReference type="PROSITE" id="PS00793">
    <property type="entry name" value="DHPS_2"/>
    <property type="match status" value="1"/>
</dbReference>
<dbReference type="PROSITE" id="PS50972">
    <property type="entry name" value="PTERIN_BINDING"/>
    <property type="match status" value="1"/>
</dbReference>
<gene>
    <name type="primary">folP</name>
</gene>
<proteinExistence type="inferred from homology"/>
<comment type="function">
    <text evidence="1">Catalyzes the condensation of para-aminobenzoate (pABA) with 6-hydroxymethyl-7,8-dihydropterin diphosphate (DHPt-PP) to form 7,8-dihydropteroate (H2Pte), the immediate precursor of folate derivatives.</text>
</comment>
<comment type="catalytic activity">
    <reaction evidence="1">
        <text>(7,8-dihydropterin-6-yl)methyl diphosphate + 4-aminobenzoate = 7,8-dihydropteroate + diphosphate</text>
        <dbReference type="Rhea" id="RHEA:19949"/>
        <dbReference type="ChEBI" id="CHEBI:17836"/>
        <dbReference type="ChEBI" id="CHEBI:17839"/>
        <dbReference type="ChEBI" id="CHEBI:33019"/>
        <dbReference type="ChEBI" id="CHEBI:72950"/>
        <dbReference type="EC" id="2.5.1.15"/>
    </reaction>
</comment>
<comment type="cofactor">
    <cofactor evidence="1">
        <name>Mg(2+)</name>
        <dbReference type="ChEBI" id="CHEBI:18420"/>
    </cofactor>
</comment>
<comment type="pathway">
    <text>Cofactor biosynthesis; tetrahydrofolate biosynthesis; 7,8-dihydrofolate from 2-amino-4-hydroxy-6-hydroxymethyl-7,8-dihydropteridine diphosphate and 4-aminobenzoate: step 1/2.</text>
</comment>
<comment type="subunit">
    <text>Homodimer or homotrimer.</text>
</comment>
<comment type="similarity">
    <text evidence="4">Belongs to the DHPS family.</text>
</comment>
<keyword id="KW-0289">Folate biosynthesis</keyword>
<keyword id="KW-0460">Magnesium</keyword>
<keyword id="KW-0479">Metal-binding</keyword>
<keyword id="KW-0808">Transferase</keyword>
<accession>P0C0G0</accession>
<accession>O33724</accession>
<sequence length="266" mass="28515">MKIGKFVIDGNAAIMGILNVTPDSFSDGGSYTTVQKVLQQVDQLIAGGAKIIDVGGESTRPGYQFVSAADEIERVVPMIKAIKAKYDVLISIDTYKTETARAALEAGADILNDVRAGLYDGEMLALAAEYDVPIILMHNQKEEVYQDVTQDVCDFLSARAQAAIDAGVPKDNIWIDPGFGFPKSVQHNMELLKGLDHVCQLGYPVLFGISRKGVVDALLGGNTKAKERDGATAALSAYALGKGCQLVRVHDVKANQEIVAVLSQLM</sequence>
<organism>
    <name type="scientific">Streptococcus pyogenes</name>
    <dbReference type="NCBI Taxonomy" id="1314"/>
    <lineage>
        <taxon>Bacteria</taxon>
        <taxon>Bacillati</taxon>
        <taxon>Bacillota</taxon>
        <taxon>Bacilli</taxon>
        <taxon>Lactobacillales</taxon>
        <taxon>Streptococcaceae</taxon>
        <taxon>Streptococcus</taxon>
    </lineage>
</organism>
<protein>
    <recommendedName>
        <fullName>Dihydropteroate synthase</fullName>
        <shortName>DHPS</shortName>
        <ecNumber>2.5.1.15</ecNumber>
    </recommendedName>
    <alternativeName>
        <fullName>Dihydropteroate pyrophosphorylase</fullName>
    </alternativeName>
</protein>